<proteinExistence type="inferred from homology"/>
<comment type="function">
    <text evidence="1">Involved in the biosynthesis of branched-chain amino acids (BCAA). Catalyzes an alkyl-migration followed by a ketol-acid reduction of (S)-2-acetolactate (S2AL) to yield (R)-2,3-dihydroxy-isovalerate. In the isomerase reaction, S2AL is rearranged via a Mg-dependent methyl migration to produce 3-hydroxy-3-methyl-2-ketobutyrate (HMKB). In the reductase reaction, this 2-ketoacid undergoes a metal-dependent reduction by NADPH to yield (R)-2,3-dihydroxy-isovalerate.</text>
</comment>
<comment type="catalytic activity">
    <reaction evidence="1">
        <text>(2R)-2,3-dihydroxy-3-methylbutanoate + NADP(+) = (2S)-2-acetolactate + NADPH + H(+)</text>
        <dbReference type="Rhea" id="RHEA:22068"/>
        <dbReference type="ChEBI" id="CHEBI:15378"/>
        <dbReference type="ChEBI" id="CHEBI:49072"/>
        <dbReference type="ChEBI" id="CHEBI:57783"/>
        <dbReference type="ChEBI" id="CHEBI:58349"/>
        <dbReference type="ChEBI" id="CHEBI:58476"/>
        <dbReference type="EC" id="1.1.1.86"/>
    </reaction>
</comment>
<comment type="catalytic activity">
    <reaction evidence="1">
        <text>(2R,3R)-2,3-dihydroxy-3-methylpentanoate + NADP(+) = (S)-2-ethyl-2-hydroxy-3-oxobutanoate + NADPH + H(+)</text>
        <dbReference type="Rhea" id="RHEA:13493"/>
        <dbReference type="ChEBI" id="CHEBI:15378"/>
        <dbReference type="ChEBI" id="CHEBI:49256"/>
        <dbReference type="ChEBI" id="CHEBI:49258"/>
        <dbReference type="ChEBI" id="CHEBI:57783"/>
        <dbReference type="ChEBI" id="CHEBI:58349"/>
        <dbReference type="EC" id="1.1.1.86"/>
    </reaction>
</comment>
<comment type="cofactor">
    <cofactor evidence="1">
        <name>Mg(2+)</name>
        <dbReference type="ChEBI" id="CHEBI:18420"/>
    </cofactor>
    <text evidence="1">Binds 2 magnesium ions per subunit.</text>
</comment>
<comment type="pathway">
    <text evidence="1">Amino-acid biosynthesis; L-isoleucine biosynthesis; L-isoleucine from 2-oxobutanoate: step 2/4.</text>
</comment>
<comment type="pathway">
    <text evidence="1">Amino-acid biosynthesis; L-valine biosynthesis; L-valine from pyruvate: step 2/4.</text>
</comment>
<comment type="similarity">
    <text evidence="1">Belongs to the ketol-acid reductoisomerase family.</text>
</comment>
<evidence type="ECO:0000255" key="1">
    <source>
        <dbReference type="HAMAP-Rule" id="MF_00435"/>
    </source>
</evidence>
<evidence type="ECO:0000255" key="2">
    <source>
        <dbReference type="PROSITE-ProRule" id="PRU01197"/>
    </source>
</evidence>
<evidence type="ECO:0000255" key="3">
    <source>
        <dbReference type="PROSITE-ProRule" id="PRU01198"/>
    </source>
</evidence>
<name>ILVC_LEUMM</name>
<protein>
    <recommendedName>
        <fullName evidence="1">Ketol-acid reductoisomerase (NADP(+))</fullName>
        <shortName evidence="1">KARI</shortName>
        <ecNumber evidence="1">1.1.1.86</ecNumber>
    </recommendedName>
    <alternativeName>
        <fullName evidence="1">Acetohydroxy-acid isomeroreductase</fullName>
        <shortName evidence="1">AHIR</shortName>
    </alternativeName>
    <alternativeName>
        <fullName evidence="1">Alpha-keto-beta-hydroxylacyl reductoisomerase</fullName>
    </alternativeName>
    <alternativeName>
        <fullName evidence="1">Ketol-acid reductoisomerase type 1</fullName>
    </alternativeName>
    <alternativeName>
        <fullName evidence="1">Ketol-acid reductoisomerase type I</fullName>
    </alternativeName>
</protein>
<organism>
    <name type="scientific">Leuconostoc mesenteroides subsp. mesenteroides (strain ATCC 8293 / DSM 20343 / BCRC 11652 / CCM 1803 / JCM 6124 / NCDO 523 / NBRC 100496 / NCIMB 8023 / NCTC 12954 / NRRL B-1118 / 37Y)</name>
    <dbReference type="NCBI Taxonomy" id="203120"/>
    <lineage>
        <taxon>Bacteria</taxon>
        <taxon>Bacillati</taxon>
        <taxon>Bacillota</taxon>
        <taxon>Bacilli</taxon>
        <taxon>Lactobacillales</taxon>
        <taxon>Lactobacillaceae</taxon>
        <taxon>Leuconostoc</taxon>
    </lineage>
</organism>
<gene>
    <name evidence="1" type="primary">ilvC</name>
    <name type="ordered locus">LEUM_1957</name>
</gene>
<sequence>MTTKMFYDKDIDTTPLENKKIAVIGYGAQGHAQANNLRDSGFDVIMGLRPGKSFDSAKKDGFEVYSAAEATAQADVVMMETPDELQAAVWEKEVEPNLKAGSYLGFSHGFNIVYGLIKPNADINVMIIAPKGPGNIERRQFVEGGGIPSLYGVHQDPTGDTAEVAKAYAKGIGSGRAGILETTFEEETTEDLFGEQAVLCGGLTQLIEAGFNTLVEAGYSPELAYFETSHEMKMIVDLIFEGGFEKMRHDCSNTCEYGEMLNGPRIITEESKQGMRDVLKDIQDGTYAKKWLAEYNSGLKDLEKMRTEYKSGLYEQTGKKVRAMMPWISDADKYSTAADTEQFSAAK</sequence>
<reference key="1">
    <citation type="journal article" date="2006" name="Proc. Natl. Acad. Sci. U.S.A.">
        <title>Comparative genomics of the lactic acid bacteria.</title>
        <authorList>
            <person name="Makarova K.S."/>
            <person name="Slesarev A."/>
            <person name="Wolf Y.I."/>
            <person name="Sorokin A."/>
            <person name="Mirkin B."/>
            <person name="Koonin E.V."/>
            <person name="Pavlov A."/>
            <person name="Pavlova N."/>
            <person name="Karamychev V."/>
            <person name="Polouchine N."/>
            <person name="Shakhova V."/>
            <person name="Grigoriev I."/>
            <person name="Lou Y."/>
            <person name="Rohksar D."/>
            <person name="Lucas S."/>
            <person name="Huang K."/>
            <person name="Goodstein D.M."/>
            <person name="Hawkins T."/>
            <person name="Plengvidhya V."/>
            <person name="Welker D."/>
            <person name="Hughes J."/>
            <person name="Goh Y."/>
            <person name="Benson A."/>
            <person name="Baldwin K."/>
            <person name="Lee J.-H."/>
            <person name="Diaz-Muniz I."/>
            <person name="Dosti B."/>
            <person name="Smeianov V."/>
            <person name="Wechter W."/>
            <person name="Barabote R."/>
            <person name="Lorca G."/>
            <person name="Altermann E."/>
            <person name="Barrangou R."/>
            <person name="Ganesan B."/>
            <person name="Xie Y."/>
            <person name="Rawsthorne H."/>
            <person name="Tamir D."/>
            <person name="Parker C."/>
            <person name="Breidt F."/>
            <person name="Broadbent J.R."/>
            <person name="Hutkins R."/>
            <person name="O'Sullivan D."/>
            <person name="Steele J."/>
            <person name="Unlu G."/>
            <person name="Saier M.H. Jr."/>
            <person name="Klaenhammer T."/>
            <person name="Richardson P."/>
            <person name="Kozyavkin S."/>
            <person name="Weimer B.C."/>
            <person name="Mills D.A."/>
        </authorList>
    </citation>
    <scope>NUCLEOTIDE SEQUENCE [LARGE SCALE GENOMIC DNA]</scope>
    <source>
        <strain>ATCC 8293 / DSM 20343 / BCRC 11652 / CCM 1803 / JCM 6124 / NCDO 523 / NBRC 100496 / NCIMB 8023 / NCTC 12954 / NRRL B-1118 / 37Y</strain>
    </source>
</reference>
<feature type="chain" id="PRO_1000050523" description="Ketol-acid reductoisomerase (NADP(+))">
    <location>
        <begin position="1"/>
        <end position="347"/>
    </location>
</feature>
<feature type="domain" description="KARI N-terminal Rossmann" evidence="2">
    <location>
        <begin position="3"/>
        <end position="182"/>
    </location>
</feature>
<feature type="domain" description="KARI C-terminal knotted" evidence="3">
    <location>
        <begin position="183"/>
        <end position="328"/>
    </location>
</feature>
<feature type="active site" evidence="1">
    <location>
        <position position="108"/>
    </location>
</feature>
<feature type="binding site" evidence="1">
    <location>
        <begin position="26"/>
        <end position="29"/>
    </location>
    <ligand>
        <name>NADP(+)</name>
        <dbReference type="ChEBI" id="CHEBI:58349"/>
    </ligand>
</feature>
<feature type="binding site" evidence="1">
    <location>
        <position position="49"/>
    </location>
    <ligand>
        <name>NADP(+)</name>
        <dbReference type="ChEBI" id="CHEBI:58349"/>
    </ligand>
</feature>
<feature type="binding site" evidence="1">
    <location>
        <position position="53"/>
    </location>
    <ligand>
        <name>NADP(+)</name>
        <dbReference type="ChEBI" id="CHEBI:58349"/>
    </ligand>
</feature>
<feature type="binding site" evidence="1">
    <location>
        <begin position="83"/>
        <end position="86"/>
    </location>
    <ligand>
        <name>NADP(+)</name>
        <dbReference type="ChEBI" id="CHEBI:58349"/>
    </ligand>
</feature>
<feature type="binding site" evidence="1">
    <location>
        <position position="134"/>
    </location>
    <ligand>
        <name>NADP(+)</name>
        <dbReference type="ChEBI" id="CHEBI:58349"/>
    </ligand>
</feature>
<feature type="binding site" evidence="1">
    <location>
        <position position="191"/>
    </location>
    <ligand>
        <name>Mg(2+)</name>
        <dbReference type="ChEBI" id="CHEBI:18420"/>
        <label>1</label>
    </ligand>
</feature>
<feature type="binding site" evidence="1">
    <location>
        <position position="191"/>
    </location>
    <ligand>
        <name>Mg(2+)</name>
        <dbReference type="ChEBI" id="CHEBI:18420"/>
        <label>2</label>
    </ligand>
</feature>
<feature type="binding site" evidence="1">
    <location>
        <position position="195"/>
    </location>
    <ligand>
        <name>Mg(2+)</name>
        <dbReference type="ChEBI" id="CHEBI:18420"/>
        <label>1</label>
    </ligand>
</feature>
<feature type="binding site" evidence="1">
    <location>
        <position position="227"/>
    </location>
    <ligand>
        <name>Mg(2+)</name>
        <dbReference type="ChEBI" id="CHEBI:18420"/>
        <label>2</label>
    </ligand>
</feature>
<feature type="binding site" evidence="1">
    <location>
        <position position="231"/>
    </location>
    <ligand>
        <name>Mg(2+)</name>
        <dbReference type="ChEBI" id="CHEBI:18420"/>
        <label>2</label>
    </ligand>
</feature>
<feature type="binding site" evidence="1">
    <location>
        <position position="252"/>
    </location>
    <ligand>
        <name>substrate</name>
    </ligand>
</feature>
<dbReference type="EC" id="1.1.1.86" evidence="1"/>
<dbReference type="EMBL" id="CP000414">
    <property type="protein sequence ID" value="ABJ63028.1"/>
    <property type="molecule type" value="Genomic_DNA"/>
</dbReference>
<dbReference type="RefSeq" id="WP_011680494.1">
    <property type="nucleotide sequence ID" value="NC_008531.1"/>
</dbReference>
<dbReference type="SMR" id="Q03UU4"/>
<dbReference type="EnsemblBacteria" id="ABJ63028">
    <property type="protein sequence ID" value="ABJ63028"/>
    <property type="gene ID" value="LEUM_1957"/>
</dbReference>
<dbReference type="GeneID" id="29575877"/>
<dbReference type="KEGG" id="lme:LEUM_1957"/>
<dbReference type="eggNOG" id="COG0059">
    <property type="taxonomic scope" value="Bacteria"/>
</dbReference>
<dbReference type="HOGENOM" id="CLU_033821_0_1_9"/>
<dbReference type="UniPathway" id="UPA00047">
    <property type="reaction ID" value="UER00056"/>
</dbReference>
<dbReference type="UniPathway" id="UPA00049">
    <property type="reaction ID" value="UER00060"/>
</dbReference>
<dbReference type="Proteomes" id="UP000000362">
    <property type="component" value="Chromosome"/>
</dbReference>
<dbReference type="GO" id="GO:0005829">
    <property type="term" value="C:cytosol"/>
    <property type="evidence" value="ECO:0007669"/>
    <property type="project" value="TreeGrafter"/>
</dbReference>
<dbReference type="GO" id="GO:0004455">
    <property type="term" value="F:ketol-acid reductoisomerase activity"/>
    <property type="evidence" value="ECO:0007669"/>
    <property type="project" value="UniProtKB-UniRule"/>
</dbReference>
<dbReference type="GO" id="GO:0000287">
    <property type="term" value="F:magnesium ion binding"/>
    <property type="evidence" value="ECO:0007669"/>
    <property type="project" value="UniProtKB-UniRule"/>
</dbReference>
<dbReference type="GO" id="GO:0050661">
    <property type="term" value="F:NADP binding"/>
    <property type="evidence" value="ECO:0007669"/>
    <property type="project" value="InterPro"/>
</dbReference>
<dbReference type="GO" id="GO:0009097">
    <property type="term" value="P:isoleucine biosynthetic process"/>
    <property type="evidence" value="ECO:0007669"/>
    <property type="project" value="UniProtKB-UniRule"/>
</dbReference>
<dbReference type="GO" id="GO:0009099">
    <property type="term" value="P:L-valine biosynthetic process"/>
    <property type="evidence" value="ECO:0007669"/>
    <property type="project" value="UniProtKB-UniRule"/>
</dbReference>
<dbReference type="FunFam" id="3.40.50.720:FF:000023">
    <property type="entry name" value="Ketol-acid reductoisomerase (NADP(+))"/>
    <property type="match status" value="1"/>
</dbReference>
<dbReference type="Gene3D" id="6.10.240.10">
    <property type="match status" value="1"/>
</dbReference>
<dbReference type="Gene3D" id="3.40.50.720">
    <property type="entry name" value="NAD(P)-binding Rossmann-like Domain"/>
    <property type="match status" value="1"/>
</dbReference>
<dbReference type="HAMAP" id="MF_00435">
    <property type="entry name" value="IlvC"/>
    <property type="match status" value="1"/>
</dbReference>
<dbReference type="InterPro" id="IPR008927">
    <property type="entry name" value="6-PGluconate_DH-like_C_sf"/>
</dbReference>
<dbReference type="InterPro" id="IPR013023">
    <property type="entry name" value="KARI"/>
</dbReference>
<dbReference type="InterPro" id="IPR000506">
    <property type="entry name" value="KARI_C"/>
</dbReference>
<dbReference type="InterPro" id="IPR013116">
    <property type="entry name" value="KARI_N"/>
</dbReference>
<dbReference type="InterPro" id="IPR014359">
    <property type="entry name" value="KARI_prok"/>
</dbReference>
<dbReference type="InterPro" id="IPR036291">
    <property type="entry name" value="NAD(P)-bd_dom_sf"/>
</dbReference>
<dbReference type="NCBIfam" id="TIGR00465">
    <property type="entry name" value="ilvC"/>
    <property type="match status" value="1"/>
</dbReference>
<dbReference type="NCBIfam" id="NF004017">
    <property type="entry name" value="PRK05479.1"/>
    <property type="match status" value="1"/>
</dbReference>
<dbReference type="NCBIfam" id="NF009940">
    <property type="entry name" value="PRK13403.1"/>
    <property type="match status" value="1"/>
</dbReference>
<dbReference type="PANTHER" id="PTHR21371">
    <property type="entry name" value="KETOL-ACID REDUCTOISOMERASE, MITOCHONDRIAL"/>
    <property type="match status" value="1"/>
</dbReference>
<dbReference type="PANTHER" id="PTHR21371:SF1">
    <property type="entry name" value="KETOL-ACID REDUCTOISOMERASE, MITOCHONDRIAL"/>
    <property type="match status" value="1"/>
</dbReference>
<dbReference type="Pfam" id="PF01450">
    <property type="entry name" value="KARI_C"/>
    <property type="match status" value="1"/>
</dbReference>
<dbReference type="Pfam" id="PF07991">
    <property type="entry name" value="KARI_N"/>
    <property type="match status" value="1"/>
</dbReference>
<dbReference type="PIRSF" id="PIRSF000116">
    <property type="entry name" value="IlvC_gammaproteo"/>
    <property type="match status" value="1"/>
</dbReference>
<dbReference type="SUPFAM" id="SSF48179">
    <property type="entry name" value="6-phosphogluconate dehydrogenase C-terminal domain-like"/>
    <property type="match status" value="1"/>
</dbReference>
<dbReference type="SUPFAM" id="SSF51735">
    <property type="entry name" value="NAD(P)-binding Rossmann-fold domains"/>
    <property type="match status" value="1"/>
</dbReference>
<dbReference type="PROSITE" id="PS51851">
    <property type="entry name" value="KARI_C"/>
    <property type="match status" value="1"/>
</dbReference>
<dbReference type="PROSITE" id="PS51850">
    <property type="entry name" value="KARI_N"/>
    <property type="match status" value="1"/>
</dbReference>
<keyword id="KW-0028">Amino-acid biosynthesis</keyword>
<keyword id="KW-0100">Branched-chain amino acid biosynthesis</keyword>
<keyword id="KW-0460">Magnesium</keyword>
<keyword id="KW-0479">Metal-binding</keyword>
<keyword id="KW-0521">NADP</keyword>
<keyword id="KW-0560">Oxidoreductase</keyword>
<keyword id="KW-1185">Reference proteome</keyword>
<accession>Q03UU4</accession>